<protein>
    <recommendedName>
        <fullName>Probable cytochrome P450 514A1</fullName>
        <ecNumber>1.14.-.-</ecNumber>
    </recommendedName>
</protein>
<reference key="1">
    <citation type="journal article" date="2005" name="Nature">
        <title>The genome of the social amoeba Dictyostelium discoideum.</title>
        <authorList>
            <person name="Eichinger L."/>
            <person name="Pachebat J.A."/>
            <person name="Gloeckner G."/>
            <person name="Rajandream M.A."/>
            <person name="Sucgang R."/>
            <person name="Berriman M."/>
            <person name="Song J."/>
            <person name="Olsen R."/>
            <person name="Szafranski K."/>
            <person name="Xu Q."/>
            <person name="Tunggal B."/>
            <person name="Kummerfeld S."/>
            <person name="Madera M."/>
            <person name="Konfortov B.A."/>
            <person name="Rivero F."/>
            <person name="Bankier A.T."/>
            <person name="Lehmann R."/>
            <person name="Hamlin N."/>
            <person name="Davies R."/>
            <person name="Gaudet P."/>
            <person name="Fey P."/>
            <person name="Pilcher K."/>
            <person name="Chen G."/>
            <person name="Saunders D."/>
            <person name="Sodergren E.J."/>
            <person name="Davis P."/>
            <person name="Kerhornou A."/>
            <person name="Nie X."/>
            <person name="Hall N."/>
            <person name="Anjard C."/>
            <person name="Hemphill L."/>
            <person name="Bason N."/>
            <person name="Farbrother P."/>
            <person name="Desany B."/>
            <person name="Just E."/>
            <person name="Morio T."/>
            <person name="Rost R."/>
            <person name="Churcher C.M."/>
            <person name="Cooper J."/>
            <person name="Haydock S."/>
            <person name="van Driessche N."/>
            <person name="Cronin A."/>
            <person name="Goodhead I."/>
            <person name="Muzny D.M."/>
            <person name="Mourier T."/>
            <person name="Pain A."/>
            <person name="Lu M."/>
            <person name="Harper D."/>
            <person name="Lindsay R."/>
            <person name="Hauser H."/>
            <person name="James K.D."/>
            <person name="Quiles M."/>
            <person name="Madan Babu M."/>
            <person name="Saito T."/>
            <person name="Buchrieser C."/>
            <person name="Wardroper A."/>
            <person name="Felder M."/>
            <person name="Thangavelu M."/>
            <person name="Johnson D."/>
            <person name="Knights A."/>
            <person name="Loulseged H."/>
            <person name="Mungall K.L."/>
            <person name="Oliver K."/>
            <person name="Price C."/>
            <person name="Quail M.A."/>
            <person name="Urushihara H."/>
            <person name="Hernandez J."/>
            <person name="Rabbinowitsch E."/>
            <person name="Steffen D."/>
            <person name="Sanders M."/>
            <person name="Ma J."/>
            <person name="Kohara Y."/>
            <person name="Sharp S."/>
            <person name="Simmonds M.N."/>
            <person name="Spiegler S."/>
            <person name="Tivey A."/>
            <person name="Sugano S."/>
            <person name="White B."/>
            <person name="Walker D."/>
            <person name="Woodward J.R."/>
            <person name="Winckler T."/>
            <person name="Tanaka Y."/>
            <person name="Shaulsky G."/>
            <person name="Schleicher M."/>
            <person name="Weinstock G.M."/>
            <person name="Rosenthal A."/>
            <person name="Cox E.C."/>
            <person name="Chisholm R.L."/>
            <person name="Gibbs R.A."/>
            <person name="Loomis W.F."/>
            <person name="Platzer M."/>
            <person name="Kay R.R."/>
            <person name="Williams J.G."/>
            <person name="Dear P.H."/>
            <person name="Noegel A.A."/>
            <person name="Barrell B.G."/>
            <person name="Kuspa A."/>
        </authorList>
    </citation>
    <scope>NUCLEOTIDE SEQUENCE [LARGE SCALE GENOMIC DNA]</scope>
    <source>
        <strain>AX4</strain>
    </source>
</reference>
<name>C5141_DICDI</name>
<comment type="cofactor">
    <cofactor evidence="1">
        <name>heme</name>
        <dbReference type="ChEBI" id="CHEBI:30413"/>
    </cofactor>
</comment>
<comment type="subcellular location">
    <subcellularLocation>
        <location evidence="3">Membrane</location>
        <topology evidence="3">Single-pass membrane protein</topology>
    </subcellularLocation>
</comment>
<comment type="similarity">
    <text evidence="3">Belongs to the cytochrome P450 family.</text>
</comment>
<keyword id="KW-0349">Heme</keyword>
<keyword id="KW-0408">Iron</keyword>
<keyword id="KW-0472">Membrane</keyword>
<keyword id="KW-0479">Metal-binding</keyword>
<keyword id="KW-0503">Monooxygenase</keyword>
<keyword id="KW-0560">Oxidoreductase</keyword>
<keyword id="KW-1185">Reference proteome</keyword>
<keyword id="KW-0812">Transmembrane</keyword>
<keyword id="KW-1133">Transmembrane helix</keyword>
<sequence length="575" mass="66214">MNTIFTIILTITILVLSLILKDLLFEGRIKKINKLIPGPSTIPVFGNLLQINAKDFPKSVNDFYERYGKVFRLRLGSVEIVVLTGPEVIDECFNKKHREIFKERYIKFSRFFGKDYNIISSNGDYHYVLRGILTSEITTRKLNNGRLESNKFILEMFSNLCKDNKETLVKNTPNQIRILAVKLILNFTLGIEENDETILIIVEKIKCIFEAAGLLIYSDYLPFLFPLDIKSMSKNDIISSYFFLKDFIGIKLDAIKIKYEKENELKNETTDETSSKLNNIPIIENYYKNYLDGSIHYDSILFSISDIIFAAVDSTSNGFSLLIGQLINKPEIQDKIYEEIMRNDENNNTNNISFADHTKYPYIISVMNESYRYNSSVPITEPNKTTEDVEVNGYKIAKGTMIIKNLRGTHLSKEFWGEDALEFKPERFKNQPLYQKGLFHFGAGPRGCPGGRFTESLTFTFLVIMLKNFKIVNPTDIPIDVEGEVGLAMQCKPFDALFIKHTNRNDFSKINKGLNQQCFTSSSQFPTCYQTEFFEFGFNGNFQLNDGIDCSSGVQQLSFFEKGFVFRVDHFLFEF</sequence>
<accession>Q54FM9</accession>
<gene>
    <name type="primary">cyp514A1</name>
    <name type="ORF">DDB_G0290743</name>
</gene>
<organism>
    <name type="scientific">Dictyostelium discoideum</name>
    <name type="common">Social amoeba</name>
    <dbReference type="NCBI Taxonomy" id="44689"/>
    <lineage>
        <taxon>Eukaryota</taxon>
        <taxon>Amoebozoa</taxon>
        <taxon>Evosea</taxon>
        <taxon>Eumycetozoa</taxon>
        <taxon>Dictyostelia</taxon>
        <taxon>Dictyosteliales</taxon>
        <taxon>Dictyosteliaceae</taxon>
        <taxon>Dictyostelium</taxon>
    </lineage>
</organism>
<dbReference type="EC" id="1.14.-.-"/>
<dbReference type="EMBL" id="AAFI02000169">
    <property type="protein sequence ID" value="EAL62077.1"/>
    <property type="molecule type" value="Genomic_DNA"/>
</dbReference>
<dbReference type="RefSeq" id="XP_635583.1">
    <property type="nucleotide sequence ID" value="XM_630491.1"/>
</dbReference>
<dbReference type="SMR" id="Q54FM9"/>
<dbReference type="STRING" id="44689.Q54FM9"/>
<dbReference type="PaxDb" id="44689-DDB0232982"/>
<dbReference type="EnsemblProtists" id="EAL62077">
    <property type="protein sequence ID" value="EAL62077"/>
    <property type="gene ID" value="DDB_G0290743"/>
</dbReference>
<dbReference type="GeneID" id="8627804"/>
<dbReference type="KEGG" id="ddi:DDB_G0290743"/>
<dbReference type="dictyBase" id="DDB_G0290743">
    <property type="gene designation" value="cyp514A1"/>
</dbReference>
<dbReference type="VEuPathDB" id="AmoebaDB:DDB_G0290743"/>
<dbReference type="eggNOG" id="KOG0156">
    <property type="taxonomic scope" value="Eukaryota"/>
</dbReference>
<dbReference type="HOGENOM" id="CLU_001570_22_0_1"/>
<dbReference type="InParanoid" id="Q54FM9"/>
<dbReference type="OMA" id="TQEEHSG"/>
<dbReference type="PhylomeDB" id="Q54FM9"/>
<dbReference type="PRO" id="PR:Q54FM9"/>
<dbReference type="Proteomes" id="UP000002195">
    <property type="component" value="Chromosome 5"/>
</dbReference>
<dbReference type="GO" id="GO:0016020">
    <property type="term" value="C:membrane"/>
    <property type="evidence" value="ECO:0007669"/>
    <property type="project" value="UniProtKB-SubCell"/>
</dbReference>
<dbReference type="GO" id="GO:0020037">
    <property type="term" value="F:heme binding"/>
    <property type="evidence" value="ECO:0007669"/>
    <property type="project" value="InterPro"/>
</dbReference>
<dbReference type="GO" id="GO:0005506">
    <property type="term" value="F:iron ion binding"/>
    <property type="evidence" value="ECO:0007669"/>
    <property type="project" value="InterPro"/>
</dbReference>
<dbReference type="GO" id="GO:0004497">
    <property type="term" value="F:monooxygenase activity"/>
    <property type="evidence" value="ECO:0007669"/>
    <property type="project" value="UniProtKB-KW"/>
</dbReference>
<dbReference type="GO" id="GO:0016705">
    <property type="term" value="F:oxidoreductase activity, acting on paired donors, with incorporation or reduction of molecular oxygen"/>
    <property type="evidence" value="ECO:0007669"/>
    <property type="project" value="InterPro"/>
</dbReference>
<dbReference type="CDD" id="cd20617">
    <property type="entry name" value="CYP1_2-like"/>
    <property type="match status" value="1"/>
</dbReference>
<dbReference type="Gene3D" id="1.10.630.10">
    <property type="entry name" value="Cytochrome P450"/>
    <property type="match status" value="1"/>
</dbReference>
<dbReference type="InterPro" id="IPR001128">
    <property type="entry name" value="Cyt_P450"/>
</dbReference>
<dbReference type="InterPro" id="IPR017972">
    <property type="entry name" value="Cyt_P450_CS"/>
</dbReference>
<dbReference type="InterPro" id="IPR002401">
    <property type="entry name" value="Cyt_P450_E_grp-I"/>
</dbReference>
<dbReference type="InterPro" id="IPR036396">
    <property type="entry name" value="Cyt_P450_sf"/>
</dbReference>
<dbReference type="PANTHER" id="PTHR24303:SF37">
    <property type="entry name" value="CYTOCHROME P450 514A1-RELATED"/>
    <property type="match status" value="1"/>
</dbReference>
<dbReference type="PANTHER" id="PTHR24303">
    <property type="entry name" value="HEME-BINDING MONOOXYGENASE FAMILY"/>
    <property type="match status" value="1"/>
</dbReference>
<dbReference type="Pfam" id="PF00067">
    <property type="entry name" value="p450"/>
    <property type="match status" value="1"/>
</dbReference>
<dbReference type="PRINTS" id="PR00463">
    <property type="entry name" value="EP450I"/>
</dbReference>
<dbReference type="SUPFAM" id="SSF48264">
    <property type="entry name" value="Cytochrome P450"/>
    <property type="match status" value="1"/>
</dbReference>
<dbReference type="PROSITE" id="PS00086">
    <property type="entry name" value="CYTOCHROME_P450"/>
    <property type="match status" value="1"/>
</dbReference>
<evidence type="ECO:0000250" key="1"/>
<evidence type="ECO:0000255" key="2"/>
<evidence type="ECO:0000305" key="3"/>
<feature type="chain" id="PRO_0000318820" description="Probable cytochrome P450 514A1">
    <location>
        <begin position="1"/>
        <end position="575"/>
    </location>
</feature>
<feature type="transmembrane region" description="Helical" evidence="2">
    <location>
        <begin position="4"/>
        <end position="24"/>
    </location>
</feature>
<feature type="binding site" description="axial binding residue" evidence="1">
    <location>
        <position position="448"/>
    </location>
    <ligand>
        <name>heme</name>
        <dbReference type="ChEBI" id="CHEBI:30413"/>
    </ligand>
    <ligandPart>
        <name>Fe</name>
        <dbReference type="ChEBI" id="CHEBI:18248"/>
    </ligandPart>
</feature>
<proteinExistence type="inferred from homology"/>